<gene>
    <name evidence="1" type="primary">rsmH</name>
    <name type="synonym">mraW</name>
    <name type="ordered locus">Bd3215</name>
</gene>
<comment type="function">
    <text evidence="1">Specifically methylates the N4 position of cytidine in position 1402 (C1402) of 16S rRNA.</text>
</comment>
<comment type="catalytic activity">
    <reaction evidence="1">
        <text>cytidine(1402) in 16S rRNA + S-adenosyl-L-methionine = N(4)-methylcytidine(1402) in 16S rRNA + S-adenosyl-L-homocysteine + H(+)</text>
        <dbReference type="Rhea" id="RHEA:42928"/>
        <dbReference type="Rhea" id="RHEA-COMP:10286"/>
        <dbReference type="Rhea" id="RHEA-COMP:10287"/>
        <dbReference type="ChEBI" id="CHEBI:15378"/>
        <dbReference type="ChEBI" id="CHEBI:57856"/>
        <dbReference type="ChEBI" id="CHEBI:59789"/>
        <dbReference type="ChEBI" id="CHEBI:74506"/>
        <dbReference type="ChEBI" id="CHEBI:82748"/>
        <dbReference type="EC" id="2.1.1.199"/>
    </reaction>
</comment>
<comment type="subcellular location">
    <subcellularLocation>
        <location evidence="1">Cytoplasm</location>
    </subcellularLocation>
</comment>
<comment type="similarity">
    <text evidence="1">Belongs to the methyltransferase superfamily. RsmH family.</text>
</comment>
<evidence type="ECO:0000255" key="1">
    <source>
        <dbReference type="HAMAP-Rule" id="MF_01007"/>
    </source>
</evidence>
<name>RSMH_BDEBA</name>
<dbReference type="EC" id="2.1.1.199" evidence="1"/>
<dbReference type="EMBL" id="BX842655">
    <property type="protein sequence ID" value="CAE78034.1"/>
    <property type="molecule type" value="Genomic_DNA"/>
</dbReference>
<dbReference type="RefSeq" id="WP_011165572.1">
    <property type="nucleotide sequence ID" value="NC_005363.1"/>
</dbReference>
<dbReference type="SMR" id="P62469"/>
<dbReference type="STRING" id="264462.Bd3215"/>
<dbReference type="GeneID" id="93014055"/>
<dbReference type="KEGG" id="bba:Bd3215"/>
<dbReference type="eggNOG" id="COG0275">
    <property type="taxonomic scope" value="Bacteria"/>
</dbReference>
<dbReference type="HOGENOM" id="CLU_038422_2_0_7"/>
<dbReference type="Proteomes" id="UP000008080">
    <property type="component" value="Chromosome"/>
</dbReference>
<dbReference type="GO" id="GO:0005737">
    <property type="term" value="C:cytoplasm"/>
    <property type="evidence" value="ECO:0007669"/>
    <property type="project" value="UniProtKB-SubCell"/>
</dbReference>
<dbReference type="GO" id="GO:0071424">
    <property type="term" value="F:rRNA (cytosine-N4-)-methyltransferase activity"/>
    <property type="evidence" value="ECO:0007669"/>
    <property type="project" value="UniProtKB-UniRule"/>
</dbReference>
<dbReference type="GO" id="GO:0070475">
    <property type="term" value="P:rRNA base methylation"/>
    <property type="evidence" value="ECO:0007669"/>
    <property type="project" value="UniProtKB-UniRule"/>
</dbReference>
<dbReference type="Gene3D" id="1.10.150.170">
    <property type="entry name" value="Putative methyltransferase TM0872, insert domain"/>
    <property type="match status" value="1"/>
</dbReference>
<dbReference type="Gene3D" id="3.40.50.150">
    <property type="entry name" value="Vaccinia Virus protein VP39"/>
    <property type="match status" value="1"/>
</dbReference>
<dbReference type="HAMAP" id="MF_01007">
    <property type="entry name" value="16SrRNA_methyltr_H"/>
    <property type="match status" value="1"/>
</dbReference>
<dbReference type="InterPro" id="IPR002903">
    <property type="entry name" value="RsmH"/>
</dbReference>
<dbReference type="InterPro" id="IPR023397">
    <property type="entry name" value="SAM-dep_MeTrfase_MraW_recog"/>
</dbReference>
<dbReference type="InterPro" id="IPR029063">
    <property type="entry name" value="SAM-dependent_MTases_sf"/>
</dbReference>
<dbReference type="NCBIfam" id="TIGR00006">
    <property type="entry name" value="16S rRNA (cytosine(1402)-N(4))-methyltransferase RsmH"/>
    <property type="match status" value="1"/>
</dbReference>
<dbReference type="PANTHER" id="PTHR11265:SF0">
    <property type="entry name" value="12S RRNA N4-METHYLCYTIDINE METHYLTRANSFERASE"/>
    <property type="match status" value="1"/>
</dbReference>
<dbReference type="PANTHER" id="PTHR11265">
    <property type="entry name" value="S-ADENOSYL-METHYLTRANSFERASE MRAW"/>
    <property type="match status" value="1"/>
</dbReference>
<dbReference type="Pfam" id="PF01795">
    <property type="entry name" value="Methyltransf_5"/>
    <property type="match status" value="1"/>
</dbReference>
<dbReference type="PIRSF" id="PIRSF004486">
    <property type="entry name" value="MraW"/>
    <property type="match status" value="1"/>
</dbReference>
<dbReference type="SUPFAM" id="SSF81799">
    <property type="entry name" value="Putative methyltransferase TM0872, insert domain"/>
    <property type="match status" value="1"/>
</dbReference>
<dbReference type="SUPFAM" id="SSF53335">
    <property type="entry name" value="S-adenosyl-L-methionine-dependent methyltransferases"/>
    <property type="match status" value="1"/>
</dbReference>
<accession>P62469</accession>
<protein>
    <recommendedName>
        <fullName evidence="1">Ribosomal RNA small subunit methyltransferase H</fullName>
        <ecNumber evidence="1">2.1.1.199</ecNumber>
    </recommendedName>
    <alternativeName>
        <fullName evidence="1">16S rRNA m(4)C1402 methyltransferase</fullName>
    </alternativeName>
    <alternativeName>
        <fullName evidence="1">rRNA (cytosine-N(4)-)-methyltransferase RsmH</fullName>
    </alternativeName>
</protein>
<sequence>MKKYKPKSGERIERQEEVIPPKVELPFEFSPEHYPVLLQEVLAAFYPLRDKKELSYFDGTFGRGGHYMALKYAYPQMKATVMDQDLAAIAFAQSRFQTEVEKGQLNVIHGNFTQFSEHNLNNFDMMLLDLGVSSPQLDQGERGFSFYNDGPLDMRMNQQQGLTAEVLINTASEDELIRIFKEYGEVYRPSRVVRAIVNDRKTKAFQTTGALAGLIERVDGWQVKGHHPATKYFMALRLAVNSELEVVAEAIPKMIRALNPGGRLAVISFHSLEDRIVKNIFRESEDLGRTVTKKVIVPTQEECDRNSRSRSAKLRIFERSAQDELTKL</sequence>
<feature type="chain" id="PRO_0000108582" description="Ribosomal RNA small subunit methyltransferase H">
    <location>
        <begin position="1"/>
        <end position="328"/>
    </location>
</feature>
<feature type="binding site" evidence="1">
    <location>
        <begin position="64"/>
        <end position="66"/>
    </location>
    <ligand>
        <name>S-adenosyl-L-methionine</name>
        <dbReference type="ChEBI" id="CHEBI:59789"/>
    </ligand>
</feature>
<feature type="binding site" evidence="1">
    <location>
        <position position="83"/>
    </location>
    <ligand>
        <name>S-adenosyl-L-methionine</name>
        <dbReference type="ChEBI" id="CHEBI:59789"/>
    </ligand>
</feature>
<feature type="binding site" evidence="1">
    <location>
        <position position="112"/>
    </location>
    <ligand>
        <name>S-adenosyl-L-methionine</name>
        <dbReference type="ChEBI" id="CHEBI:59789"/>
    </ligand>
</feature>
<feature type="binding site" evidence="1">
    <location>
        <position position="129"/>
    </location>
    <ligand>
        <name>S-adenosyl-L-methionine</name>
        <dbReference type="ChEBI" id="CHEBI:59789"/>
    </ligand>
</feature>
<feature type="binding site" evidence="1">
    <location>
        <position position="136"/>
    </location>
    <ligand>
        <name>S-adenosyl-L-methionine</name>
        <dbReference type="ChEBI" id="CHEBI:59789"/>
    </ligand>
</feature>
<reference key="1">
    <citation type="journal article" date="2004" name="Science">
        <title>A predator unmasked: life cycle of Bdellovibrio bacteriovorus from a genomic perspective.</title>
        <authorList>
            <person name="Rendulic S."/>
            <person name="Jagtap P."/>
            <person name="Rosinus A."/>
            <person name="Eppinger M."/>
            <person name="Baar C."/>
            <person name="Lanz C."/>
            <person name="Keller H."/>
            <person name="Lambert C."/>
            <person name="Evans K.J."/>
            <person name="Goesmann A."/>
            <person name="Meyer F."/>
            <person name="Sockett R.E."/>
            <person name="Schuster S.C."/>
        </authorList>
    </citation>
    <scope>NUCLEOTIDE SEQUENCE [LARGE SCALE GENOMIC DNA]</scope>
    <source>
        <strain>ATCC 15356 / DSM 50701 / NCIMB 9529 / HD100</strain>
    </source>
</reference>
<organism>
    <name type="scientific">Bdellovibrio bacteriovorus (strain ATCC 15356 / DSM 50701 / NCIMB 9529 / HD100)</name>
    <dbReference type="NCBI Taxonomy" id="264462"/>
    <lineage>
        <taxon>Bacteria</taxon>
        <taxon>Pseudomonadati</taxon>
        <taxon>Bdellovibrionota</taxon>
        <taxon>Bdellovibrionia</taxon>
        <taxon>Bdellovibrionales</taxon>
        <taxon>Pseudobdellovibrionaceae</taxon>
        <taxon>Bdellovibrio</taxon>
    </lineage>
</organism>
<keyword id="KW-0963">Cytoplasm</keyword>
<keyword id="KW-0489">Methyltransferase</keyword>
<keyword id="KW-1185">Reference proteome</keyword>
<keyword id="KW-0698">rRNA processing</keyword>
<keyword id="KW-0949">S-adenosyl-L-methionine</keyword>
<keyword id="KW-0808">Transferase</keyword>
<proteinExistence type="inferred from homology"/>